<accession>Q9M1C2</accession>
<keyword id="KW-0143">Chaperone</keyword>
<keyword id="KW-0150">Chloroplast</keyword>
<keyword id="KW-0934">Plastid</keyword>
<keyword id="KW-1185">Reference proteome</keyword>
<keyword id="KW-0809">Transit peptide</keyword>
<feature type="transit peptide" description="Chloroplast" evidence="2">
    <location>
        <begin position="1"/>
        <end position="61"/>
    </location>
</feature>
<feature type="chain" id="PRO_0000438193" description="10 kDa chaperonin 1, chloroplastic">
    <location>
        <begin position="62"/>
        <end position="138"/>
    </location>
</feature>
<feature type="region of interest" description="Cpn-10 domain" evidence="4">
    <location>
        <begin position="50"/>
        <end position="137"/>
    </location>
</feature>
<sequence>MASSFITVPKPFLSFPIKTNAPTLPQQTLLGIRRNSFRINAVSTKWEPAKVVPQADRVLVRLEVLPEKSSGGVLLPKSAVKFERYLTGEVVSVGSEVGEVEPGKKVLFSDMSAYEVDFGTEDAKHCFCKESDLLAIVQ</sequence>
<evidence type="ECO:0000250" key="1">
    <source>
        <dbReference type="UniProtKB" id="O80504"/>
    </source>
</evidence>
<evidence type="ECO:0000255" key="2"/>
<evidence type="ECO:0000269" key="3">
    <source>
    </source>
</evidence>
<evidence type="ECO:0000305" key="4"/>
<evidence type="ECO:0000312" key="5">
    <source>
        <dbReference type="Araport" id="AT3G60210"/>
    </source>
</evidence>
<evidence type="ECO:0000312" key="6">
    <source>
        <dbReference type="EMBL" id="CAB75936.1"/>
    </source>
</evidence>
<organism>
    <name type="scientific">Arabidopsis thaliana</name>
    <name type="common">Mouse-ear cress</name>
    <dbReference type="NCBI Taxonomy" id="3702"/>
    <lineage>
        <taxon>Eukaryota</taxon>
        <taxon>Viridiplantae</taxon>
        <taxon>Streptophyta</taxon>
        <taxon>Embryophyta</taxon>
        <taxon>Tracheophyta</taxon>
        <taxon>Spermatophyta</taxon>
        <taxon>Magnoliopsida</taxon>
        <taxon>eudicotyledons</taxon>
        <taxon>Gunneridae</taxon>
        <taxon>Pentapetalae</taxon>
        <taxon>rosids</taxon>
        <taxon>malvids</taxon>
        <taxon>Brassicales</taxon>
        <taxon>Brassicaceae</taxon>
        <taxon>Camelineae</taxon>
        <taxon>Arabidopsis</taxon>
    </lineage>
</organism>
<reference key="1">
    <citation type="journal article" date="2000" name="Nature">
        <title>Sequence and analysis of chromosome 3 of the plant Arabidopsis thaliana.</title>
        <authorList>
            <person name="Salanoubat M."/>
            <person name="Lemcke K."/>
            <person name="Rieger M."/>
            <person name="Ansorge W."/>
            <person name="Unseld M."/>
            <person name="Fartmann B."/>
            <person name="Valle G."/>
            <person name="Bloecker H."/>
            <person name="Perez-Alonso M."/>
            <person name="Obermaier B."/>
            <person name="Delseny M."/>
            <person name="Boutry M."/>
            <person name="Grivell L.A."/>
            <person name="Mache R."/>
            <person name="Puigdomenech P."/>
            <person name="De Simone V."/>
            <person name="Choisne N."/>
            <person name="Artiguenave F."/>
            <person name="Robert C."/>
            <person name="Brottier P."/>
            <person name="Wincker P."/>
            <person name="Cattolico L."/>
            <person name="Weissenbach J."/>
            <person name="Saurin W."/>
            <person name="Quetier F."/>
            <person name="Schaefer M."/>
            <person name="Mueller-Auer S."/>
            <person name="Gabel C."/>
            <person name="Fuchs M."/>
            <person name="Benes V."/>
            <person name="Wurmbach E."/>
            <person name="Drzonek H."/>
            <person name="Erfle H."/>
            <person name="Jordan N."/>
            <person name="Bangert S."/>
            <person name="Wiedelmann R."/>
            <person name="Kranz H."/>
            <person name="Voss H."/>
            <person name="Holland R."/>
            <person name="Brandt P."/>
            <person name="Nyakatura G."/>
            <person name="Vezzi A."/>
            <person name="D'Angelo M."/>
            <person name="Pallavicini A."/>
            <person name="Toppo S."/>
            <person name="Simionati B."/>
            <person name="Conrad A."/>
            <person name="Hornischer K."/>
            <person name="Kauer G."/>
            <person name="Loehnert T.-H."/>
            <person name="Nordsiek G."/>
            <person name="Reichelt J."/>
            <person name="Scharfe M."/>
            <person name="Schoen O."/>
            <person name="Bargues M."/>
            <person name="Terol J."/>
            <person name="Climent J."/>
            <person name="Navarro P."/>
            <person name="Collado C."/>
            <person name="Perez-Perez A."/>
            <person name="Ottenwaelder B."/>
            <person name="Duchemin D."/>
            <person name="Cooke R."/>
            <person name="Laudie M."/>
            <person name="Berger-Llauro C."/>
            <person name="Purnelle B."/>
            <person name="Masuy D."/>
            <person name="de Haan M."/>
            <person name="Maarse A.C."/>
            <person name="Alcaraz J.-P."/>
            <person name="Cottet A."/>
            <person name="Casacuberta E."/>
            <person name="Monfort A."/>
            <person name="Argiriou A."/>
            <person name="Flores M."/>
            <person name="Liguori R."/>
            <person name="Vitale D."/>
            <person name="Mannhaupt G."/>
            <person name="Haase D."/>
            <person name="Schoof H."/>
            <person name="Rudd S."/>
            <person name="Zaccaria P."/>
            <person name="Mewes H.-W."/>
            <person name="Mayer K.F.X."/>
            <person name="Kaul S."/>
            <person name="Town C.D."/>
            <person name="Koo H.L."/>
            <person name="Tallon L.J."/>
            <person name="Jenkins J."/>
            <person name="Rooney T."/>
            <person name="Rizzo M."/>
            <person name="Walts A."/>
            <person name="Utterback T."/>
            <person name="Fujii C.Y."/>
            <person name="Shea T.P."/>
            <person name="Creasy T.H."/>
            <person name="Haas B."/>
            <person name="Maiti R."/>
            <person name="Wu D."/>
            <person name="Peterson J."/>
            <person name="Van Aken S."/>
            <person name="Pai G."/>
            <person name="Militscher J."/>
            <person name="Sellers P."/>
            <person name="Gill J.E."/>
            <person name="Feldblyum T.V."/>
            <person name="Preuss D."/>
            <person name="Lin X."/>
            <person name="Nierman W.C."/>
            <person name="Salzberg S.L."/>
            <person name="White O."/>
            <person name="Venter J.C."/>
            <person name="Fraser C.M."/>
            <person name="Kaneko T."/>
            <person name="Nakamura Y."/>
            <person name="Sato S."/>
            <person name="Kato T."/>
            <person name="Asamizu E."/>
            <person name="Sasamoto S."/>
            <person name="Kimura T."/>
            <person name="Idesawa K."/>
            <person name="Kawashima K."/>
            <person name="Kishida Y."/>
            <person name="Kiyokawa C."/>
            <person name="Kohara M."/>
            <person name="Matsumoto M."/>
            <person name="Matsuno A."/>
            <person name="Muraki A."/>
            <person name="Nakayama S."/>
            <person name="Nakazaki N."/>
            <person name="Shinpo S."/>
            <person name="Takeuchi C."/>
            <person name="Wada T."/>
            <person name="Watanabe A."/>
            <person name="Yamada M."/>
            <person name="Yasuda M."/>
            <person name="Tabata S."/>
        </authorList>
    </citation>
    <scope>NUCLEOTIDE SEQUENCE [LARGE SCALE GENOMIC DNA]</scope>
    <source>
        <strain>cv. Columbia</strain>
    </source>
</reference>
<reference key="2">
    <citation type="journal article" date="2017" name="Plant J.">
        <title>Araport11: a complete reannotation of the Arabidopsis thaliana reference genome.</title>
        <authorList>
            <person name="Cheng C.Y."/>
            <person name="Krishnakumar V."/>
            <person name="Chan A.P."/>
            <person name="Thibaud-Nissen F."/>
            <person name="Schobel S."/>
            <person name="Town C.D."/>
        </authorList>
    </citation>
    <scope>GENOME REANNOTATION</scope>
    <source>
        <strain>cv. Columbia</strain>
    </source>
</reference>
<reference key="3">
    <citation type="journal article" date="2003" name="Science">
        <title>Empirical analysis of transcriptional activity in the Arabidopsis genome.</title>
        <authorList>
            <person name="Yamada K."/>
            <person name="Lim J."/>
            <person name="Dale J.M."/>
            <person name="Chen H."/>
            <person name="Shinn P."/>
            <person name="Palm C.J."/>
            <person name="Southwick A.M."/>
            <person name="Wu H.C."/>
            <person name="Kim C.J."/>
            <person name="Nguyen M."/>
            <person name="Pham P.K."/>
            <person name="Cheuk R.F."/>
            <person name="Karlin-Newmann G."/>
            <person name="Liu S.X."/>
            <person name="Lam B."/>
            <person name="Sakano H."/>
            <person name="Wu T."/>
            <person name="Yu G."/>
            <person name="Miranda M."/>
            <person name="Quach H.L."/>
            <person name="Tripp M."/>
            <person name="Chang C.H."/>
            <person name="Lee J.M."/>
            <person name="Toriumi M.J."/>
            <person name="Chan M.M."/>
            <person name="Tang C.C."/>
            <person name="Onodera C.S."/>
            <person name="Deng J.M."/>
            <person name="Akiyama K."/>
            <person name="Ansari Y."/>
            <person name="Arakawa T."/>
            <person name="Banh J."/>
            <person name="Banno F."/>
            <person name="Bowser L."/>
            <person name="Brooks S.Y."/>
            <person name="Carninci P."/>
            <person name="Chao Q."/>
            <person name="Choy N."/>
            <person name="Enju A."/>
            <person name="Goldsmith A.D."/>
            <person name="Gurjal M."/>
            <person name="Hansen N.F."/>
            <person name="Hayashizaki Y."/>
            <person name="Johnson-Hopson C."/>
            <person name="Hsuan V.W."/>
            <person name="Iida K."/>
            <person name="Karnes M."/>
            <person name="Khan S."/>
            <person name="Koesema E."/>
            <person name="Ishida J."/>
            <person name="Jiang P.X."/>
            <person name="Jones T."/>
            <person name="Kawai J."/>
            <person name="Kamiya A."/>
            <person name="Meyers C."/>
            <person name="Nakajima M."/>
            <person name="Narusaka M."/>
            <person name="Seki M."/>
            <person name="Sakurai T."/>
            <person name="Satou M."/>
            <person name="Tamse R."/>
            <person name="Vaysberg M."/>
            <person name="Wallender E.K."/>
            <person name="Wong C."/>
            <person name="Yamamura Y."/>
            <person name="Yuan S."/>
            <person name="Shinozaki K."/>
            <person name="Davis R.W."/>
            <person name="Theologis A."/>
            <person name="Ecker J.R."/>
        </authorList>
    </citation>
    <scope>NUCLEOTIDE SEQUENCE [LARGE SCALE MRNA]</scope>
    <source>
        <strain>cv. Columbia</strain>
    </source>
</reference>
<reference key="4">
    <citation type="submission" date="2006-07" db="EMBL/GenBank/DDBJ databases">
        <title>Large-scale analysis of RIKEN Arabidopsis full-length (RAFL) cDNAs.</title>
        <authorList>
            <person name="Totoki Y."/>
            <person name="Seki M."/>
            <person name="Ishida J."/>
            <person name="Nakajima M."/>
            <person name="Enju A."/>
            <person name="Kamiya A."/>
            <person name="Narusaka M."/>
            <person name="Shin-i T."/>
            <person name="Nakagawa M."/>
            <person name="Sakamoto N."/>
            <person name="Oishi K."/>
            <person name="Kohara Y."/>
            <person name="Kobayashi M."/>
            <person name="Toyoda A."/>
            <person name="Sakaki Y."/>
            <person name="Sakurai T."/>
            <person name="Iida K."/>
            <person name="Akiyama K."/>
            <person name="Satou M."/>
            <person name="Toyoda T."/>
            <person name="Konagaya A."/>
            <person name="Carninci P."/>
            <person name="Kawai J."/>
            <person name="Hayashizaki Y."/>
            <person name="Shinozaki K."/>
        </authorList>
    </citation>
    <scope>NUCLEOTIDE SEQUENCE [LARGE SCALE MRNA]</scope>
    <source>
        <strain>cv. Columbia</strain>
    </source>
</reference>
<reference key="5">
    <citation type="submission" date="2002-03" db="EMBL/GenBank/DDBJ databases">
        <title>Full-length cDNA from Arabidopsis thaliana.</title>
        <authorList>
            <person name="Brover V.V."/>
            <person name="Troukhan M.E."/>
            <person name="Alexandrov N.A."/>
            <person name="Lu Y.-P."/>
            <person name="Flavell R.B."/>
            <person name="Feldmann K.A."/>
        </authorList>
    </citation>
    <scope>NUCLEOTIDE SEQUENCE [LARGE SCALE MRNA]</scope>
</reference>
<reference key="6">
    <citation type="journal article" date="2013" name="Plant Mol. Biol.">
        <title>Cochaperonin CPN20 negatively regulates abscisic acid signaling in Arabidopsis.</title>
        <authorList>
            <person name="Zhang X.F."/>
            <person name="Jiang T."/>
            <person name="Wu Z."/>
            <person name="Du S.Y."/>
            <person name="Yu Y.T."/>
            <person name="Jiang S.C."/>
            <person name="Lu K."/>
            <person name="Feng X.J."/>
            <person name="Wang X.F."/>
            <person name="Zhang D.P."/>
        </authorList>
    </citation>
    <scope>TISSUE SPECIFICITY</scope>
</reference>
<name>CH101_ARATH</name>
<dbReference type="EMBL" id="AL138658">
    <property type="protein sequence ID" value="CAB75936.1"/>
    <property type="molecule type" value="Genomic_DNA"/>
</dbReference>
<dbReference type="EMBL" id="CP002686">
    <property type="protein sequence ID" value="AEE80024.1"/>
    <property type="molecule type" value="Genomic_DNA"/>
</dbReference>
<dbReference type="EMBL" id="BT005842">
    <property type="protein sequence ID" value="AAO64777.1"/>
    <property type="molecule type" value="mRNA"/>
</dbReference>
<dbReference type="EMBL" id="AK228307">
    <property type="protein sequence ID" value="BAF00250.1"/>
    <property type="molecule type" value="mRNA"/>
</dbReference>
<dbReference type="EMBL" id="AY087462">
    <property type="protein sequence ID" value="AAM65007.1"/>
    <property type="molecule type" value="mRNA"/>
</dbReference>
<dbReference type="PIR" id="T47845">
    <property type="entry name" value="T47845"/>
</dbReference>
<dbReference type="RefSeq" id="NP_191580.1">
    <property type="nucleotide sequence ID" value="NM_115884.3"/>
</dbReference>
<dbReference type="SMR" id="Q9M1C2"/>
<dbReference type="FunCoup" id="Q9M1C2">
    <property type="interactions" value="467"/>
</dbReference>
<dbReference type="IntAct" id="Q9M1C2">
    <property type="interactions" value="2"/>
</dbReference>
<dbReference type="STRING" id="3702.Q9M1C2"/>
<dbReference type="iPTMnet" id="Q9M1C2"/>
<dbReference type="PaxDb" id="3702-AT3G60210.1"/>
<dbReference type="ProteomicsDB" id="220390"/>
<dbReference type="EnsemblPlants" id="AT3G60210.1">
    <property type="protein sequence ID" value="AT3G60210.1"/>
    <property type="gene ID" value="AT3G60210"/>
</dbReference>
<dbReference type="GeneID" id="825191"/>
<dbReference type="Gramene" id="AT3G60210.1">
    <property type="protein sequence ID" value="AT3G60210.1"/>
    <property type="gene ID" value="AT3G60210"/>
</dbReference>
<dbReference type="KEGG" id="ath:AT3G60210"/>
<dbReference type="Araport" id="AT3G60210"/>
<dbReference type="TAIR" id="AT3G60210">
    <property type="gene designation" value="GROES"/>
</dbReference>
<dbReference type="eggNOG" id="KOG1641">
    <property type="taxonomic scope" value="Eukaryota"/>
</dbReference>
<dbReference type="HOGENOM" id="CLU_119260_0_0_1"/>
<dbReference type="InParanoid" id="Q9M1C2"/>
<dbReference type="OMA" id="GRHCFCK"/>
<dbReference type="PhylomeDB" id="Q9M1C2"/>
<dbReference type="PRO" id="PR:Q9M1C2"/>
<dbReference type="Proteomes" id="UP000006548">
    <property type="component" value="Chromosome 3"/>
</dbReference>
<dbReference type="ExpressionAtlas" id="Q9M1C2">
    <property type="expression patterns" value="baseline and differential"/>
</dbReference>
<dbReference type="GO" id="GO:0009507">
    <property type="term" value="C:chloroplast"/>
    <property type="evidence" value="ECO:0007669"/>
    <property type="project" value="UniProtKB-SubCell"/>
</dbReference>
<dbReference type="GO" id="GO:0005829">
    <property type="term" value="C:cytosol"/>
    <property type="evidence" value="ECO:0007005"/>
    <property type="project" value="TAIR"/>
</dbReference>
<dbReference type="GO" id="GO:0005524">
    <property type="term" value="F:ATP binding"/>
    <property type="evidence" value="ECO:0007669"/>
    <property type="project" value="InterPro"/>
</dbReference>
<dbReference type="GO" id="GO:0044183">
    <property type="term" value="F:protein folding chaperone"/>
    <property type="evidence" value="ECO:0007669"/>
    <property type="project" value="InterPro"/>
</dbReference>
<dbReference type="CDD" id="cd00320">
    <property type="entry name" value="cpn10"/>
    <property type="match status" value="1"/>
</dbReference>
<dbReference type="FunFam" id="2.30.33.40:FF:000008">
    <property type="entry name" value="10 kDa chaperonin"/>
    <property type="match status" value="1"/>
</dbReference>
<dbReference type="Gene3D" id="2.30.33.40">
    <property type="entry name" value="GroES chaperonin"/>
    <property type="match status" value="1"/>
</dbReference>
<dbReference type="InterPro" id="IPR020818">
    <property type="entry name" value="Chaperonin_GroES"/>
</dbReference>
<dbReference type="InterPro" id="IPR037124">
    <property type="entry name" value="Chaperonin_GroES_sf"/>
</dbReference>
<dbReference type="InterPro" id="IPR011032">
    <property type="entry name" value="GroES-like_sf"/>
</dbReference>
<dbReference type="PANTHER" id="PTHR10772:SF13">
    <property type="entry name" value="10 KDA CHAPERONIN 1, CHLOROPLASTIC-RELATED"/>
    <property type="match status" value="1"/>
</dbReference>
<dbReference type="PANTHER" id="PTHR10772">
    <property type="entry name" value="10 KDA HEAT SHOCK PROTEIN"/>
    <property type="match status" value="1"/>
</dbReference>
<dbReference type="Pfam" id="PF00166">
    <property type="entry name" value="Cpn10"/>
    <property type="match status" value="1"/>
</dbReference>
<dbReference type="PRINTS" id="PR00297">
    <property type="entry name" value="CHAPERONIN10"/>
</dbReference>
<dbReference type="SMART" id="SM00883">
    <property type="entry name" value="Cpn10"/>
    <property type="match status" value="1"/>
</dbReference>
<dbReference type="SUPFAM" id="SSF50129">
    <property type="entry name" value="GroES-like"/>
    <property type="match status" value="1"/>
</dbReference>
<comment type="function">
    <text evidence="1">Functions as a co-chaperone for protein folding in chloroplasts.</text>
</comment>
<comment type="subcellular location">
    <subcellularLocation>
        <location evidence="2">Plastid</location>
        <location evidence="2">Chloroplast</location>
    </subcellularLocation>
</comment>
<comment type="tissue specificity">
    <text evidence="3">Expressed at low levels in germinating seeds, seedlings, rosettes leaves, flowers and siliques.</text>
</comment>
<comment type="similarity">
    <text evidence="4">Belongs to the GroES chaperonin family.</text>
</comment>
<protein>
    <recommendedName>
        <fullName evidence="4">10 kDa chaperonin 1, chloroplastic</fullName>
    </recommendedName>
</protein>
<proteinExistence type="evidence at transcript level"/>
<gene>
    <name evidence="4" type="primary">CPN10-1</name>
    <name evidence="5" type="ordered locus">At3g60210</name>
    <name evidence="6" type="ORF">T2O9.190</name>
</gene>